<gene>
    <name type="primary">SF3</name>
</gene>
<dbReference type="EMBL" id="X64392">
    <property type="protein sequence ID" value="CAA45731.1"/>
    <property type="molecule type" value="Genomic_DNA"/>
</dbReference>
<dbReference type="PIR" id="S28507">
    <property type="entry name" value="S28507"/>
</dbReference>
<dbReference type="GO" id="GO:0051015">
    <property type="term" value="F:actin filament binding"/>
    <property type="evidence" value="ECO:0007669"/>
    <property type="project" value="UniProtKB-ARBA"/>
</dbReference>
<dbReference type="GO" id="GO:0046872">
    <property type="term" value="F:metal ion binding"/>
    <property type="evidence" value="ECO:0007669"/>
    <property type="project" value="UniProtKB-KW"/>
</dbReference>
<dbReference type="GO" id="GO:0051017">
    <property type="term" value="P:actin filament bundle assembly"/>
    <property type="evidence" value="ECO:0007669"/>
    <property type="project" value="UniProtKB-ARBA"/>
</dbReference>
<dbReference type="CDD" id="cd09441">
    <property type="entry name" value="LIM2_SF3"/>
    <property type="match status" value="1"/>
</dbReference>
<dbReference type="FunFam" id="2.10.110.10:FF:000002">
    <property type="entry name" value="LIM domain and actin-binding 1"/>
    <property type="match status" value="2"/>
</dbReference>
<dbReference type="Gene3D" id="2.10.110.10">
    <property type="entry name" value="Cysteine Rich Protein"/>
    <property type="match status" value="2"/>
</dbReference>
<dbReference type="InterPro" id="IPR001781">
    <property type="entry name" value="Znf_LIM"/>
</dbReference>
<dbReference type="PANTHER" id="PTHR24206">
    <property type="entry name" value="OS06G0237300 PROTEIN"/>
    <property type="match status" value="1"/>
</dbReference>
<dbReference type="Pfam" id="PF00412">
    <property type="entry name" value="LIM"/>
    <property type="match status" value="2"/>
</dbReference>
<dbReference type="SMART" id="SM00132">
    <property type="entry name" value="LIM"/>
    <property type="match status" value="2"/>
</dbReference>
<dbReference type="SUPFAM" id="SSF57716">
    <property type="entry name" value="Glucocorticoid receptor-like (DNA-binding domain)"/>
    <property type="match status" value="4"/>
</dbReference>
<dbReference type="PROSITE" id="PS00478">
    <property type="entry name" value="LIM_DOMAIN_1"/>
    <property type="match status" value="1"/>
</dbReference>
<dbReference type="PROSITE" id="PS50023">
    <property type="entry name" value="LIM_DOMAIN_2"/>
    <property type="match status" value="2"/>
</dbReference>
<accession>P29675</accession>
<protein>
    <recommendedName>
        <fullName>Pollen-specific protein SF3</fullName>
    </recommendedName>
</protein>
<evidence type="ECO:0000255" key="1">
    <source>
        <dbReference type="PROSITE-ProRule" id="PRU00125"/>
    </source>
</evidence>
<evidence type="ECO:0000256" key="2">
    <source>
        <dbReference type="SAM" id="MobiDB-lite"/>
    </source>
</evidence>
<sequence length="219" mass="24832">MKSFTGTTQKCTVCEKTVYLVDKLVANQRVYHKACFRCHHCNSTLKLSNFNSFDGVVYCRHHFDQLFKRTGSLEKSFDGTPKFKPERTFSQETQSANRLSSFFEGTRDKCNACAKIVYPIERVKVDGTAYHRACFKCCHGGCTISPSNYIAHEGRLYCKHHHIQLFKKKGNYSQLEVEETVAAPAESETQNTETQNAETQNADTQNADTQNTETQNGSV</sequence>
<proteinExistence type="evidence at transcript level"/>
<organism>
    <name type="scientific">Helianthus annuus</name>
    <name type="common">Common sunflower</name>
    <dbReference type="NCBI Taxonomy" id="4232"/>
    <lineage>
        <taxon>Eukaryota</taxon>
        <taxon>Viridiplantae</taxon>
        <taxon>Streptophyta</taxon>
        <taxon>Embryophyta</taxon>
        <taxon>Tracheophyta</taxon>
        <taxon>Spermatophyta</taxon>
        <taxon>Magnoliopsida</taxon>
        <taxon>eudicotyledons</taxon>
        <taxon>Gunneridae</taxon>
        <taxon>Pentapetalae</taxon>
        <taxon>asterids</taxon>
        <taxon>campanulids</taxon>
        <taxon>Asterales</taxon>
        <taxon>Asteraceae</taxon>
        <taxon>Asteroideae</taxon>
        <taxon>Heliantheae alliance</taxon>
        <taxon>Heliantheae</taxon>
        <taxon>Helianthus</taxon>
    </lineage>
</organism>
<keyword id="KW-0440">LIM domain</keyword>
<keyword id="KW-0479">Metal-binding</keyword>
<keyword id="KW-0677">Repeat</keyword>
<keyword id="KW-0862">Zinc</keyword>
<name>SF3_HELAN</name>
<comment type="function">
    <text>Could possibly involved in controlling pollen-specific processes such as male gamete maturation, pollen tube formation, or even fertilization.</text>
</comment>
<comment type="tissue specificity">
    <text>Pollen.</text>
</comment>
<feature type="chain" id="PRO_0000075905" description="Pollen-specific protein SF3">
    <location>
        <begin position="1"/>
        <end position="219"/>
    </location>
</feature>
<feature type="domain" description="LIM zinc-binding 1" evidence="1">
    <location>
        <begin position="9"/>
        <end position="109"/>
    </location>
</feature>
<feature type="domain" description="LIM zinc-binding 2" evidence="1">
    <location>
        <begin position="110"/>
        <end position="167"/>
    </location>
</feature>
<feature type="region of interest" description="Disordered" evidence="2">
    <location>
        <begin position="181"/>
        <end position="219"/>
    </location>
</feature>
<feature type="compositionally biased region" description="Low complexity" evidence="2">
    <location>
        <begin position="185"/>
        <end position="202"/>
    </location>
</feature>
<feature type="compositionally biased region" description="Polar residues" evidence="2">
    <location>
        <begin position="203"/>
        <end position="219"/>
    </location>
</feature>
<reference key="1">
    <citation type="journal article" date="1992" name="Plant J.">
        <title>Characterization of a pollen-specific cDNA from sunflower encoding a zinc finger protein.</title>
        <authorList>
            <person name="Baltz R."/>
            <person name="Domon C."/>
            <person name="Pillay D.T.N."/>
            <person name="Steinmetz A."/>
        </authorList>
    </citation>
    <scope>NUCLEOTIDE SEQUENCE [GENOMIC DNA]</scope>
    <source>
        <strain>cv. HA401B / Cargill</strain>
        <tissue>Pollen</tissue>
    </source>
</reference>
<reference key="2">
    <citation type="journal article" date="1992" name="Plant Cell">
        <title>A LIM motif is present in a pollen-specific protein.</title>
        <authorList>
            <person name="Baltz R."/>
            <person name="Evrard J.-L."/>
            <person name="Domon C."/>
            <person name="Steinmetz A."/>
        </authorList>
    </citation>
    <scope>IDENTIFICATION OF LIM DOMAINS</scope>
</reference>